<reference key="1">
    <citation type="journal article" date="2005" name="Virus Res.">
        <title>Complete nucleotide sequence of the hirame rhabdovirus, a pathogen of marine fish.</title>
        <authorList>
            <person name="Kim D.H."/>
            <person name="Oh H.K."/>
            <person name="Eou J.I."/>
            <person name="Seo H.J."/>
            <person name="Kim S.K."/>
            <person name="Oh M.J."/>
            <person name="Nam S.W."/>
            <person name="Choi T.J."/>
        </authorList>
    </citation>
    <scope>NUCLEOTIDE SEQUENCE [GENOMIC RNA]</scope>
</reference>
<accession>Q77SJ8</accession>
<feature type="chain" id="PRO_0000297836" description="RNA-directed RNA polymerase L">
    <location>
        <begin position="1"/>
        <end position="1986"/>
    </location>
</feature>
<feature type="domain" description="RdRp catalytic" evidence="3">
    <location>
        <begin position="560"/>
        <end position="757"/>
    </location>
</feature>
<feature type="domain" description="Mononegavirus-type SAM-dependent 2'-O-MTase" evidence="4">
    <location>
        <begin position="1592"/>
        <end position="1788"/>
    </location>
</feature>
<organismHost>
    <name type="scientific">Acanthopagrus schlegelii</name>
    <name type="common">Black porgy</name>
    <dbReference type="NCBI Taxonomy" id="72011"/>
</organismHost>
<organismHost>
    <name type="scientific">Paralichthys olivaceus</name>
    <name type="common">Bastard halibut</name>
    <name type="synonym">Hippoglossus olivaceus</name>
    <dbReference type="NCBI Taxonomy" id="8255"/>
</organismHost>
<organismHost>
    <name type="scientific">Plecoglossus altivelis</name>
    <name type="common">Ayu</name>
    <dbReference type="NCBI Taxonomy" id="61084"/>
</organismHost>
<organismHost>
    <name type="scientific">Sebastes inermis</name>
    <name type="common">Dark-banded rockfish</name>
    <dbReference type="NCBI Taxonomy" id="160818"/>
</organismHost>
<name>L_HIRRV</name>
<proteinExistence type="inferred from homology"/>
<keyword id="KW-0067">ATP-binding</keyword>
<keyword id="KW-1035">Host cytoplasm</keyword>
<keyword id="KW-0378">Hydrolase</keyword>
<keyword id="KW-0489">Methyltransferase</keyword>
<keyword id="KW-0506">mRNA capping</keyword>
<keyword id="KW-0507">mRNA processing</keyword>
<keyword id="KW-0511">Multifunctional enzyme</keyword>
<keyword id="KW-0547">Nucleotide-binding</keyword>
<keyword id="KW-0548">Nucleotidyltransferase</keyword>
<keyword id="KW-0696">RNA-directed RNA polymerase</keyword>
<keyword id="KW-0949">S-adenosyl-L-methionine</keyword>
<keyword id="KW-0808">Transferase</keyword>
<keyword id="KW-0693">Viral RNA replication</keyword>
<keyword id="KW-0946">Virion</keyword>
<evidence type="ECO:0000250" key="1">
    <source>
        <dbReference type="UniProtKB" id="P03523"/>
    </source>
</evidence>
<evidence type="ECO:0000250" key="2">
    <source>
        <dbReference type="UniProtKB" id="P28887"/>
    </source>
</evidence>
<evidence type="ECO:0000255" key="3">
    <source>
        <dbReference type="PROSITE-ProRule" id="PRU00539"/>
    </source>
</evidence>
<evidence type="ECO:0000255" key="4">
    <source>
        <dbReference type="PROSITE-ProRule" id="PRU00923"/>
    </source>
</evidence>
<evidence type="ECO:0000305" key="5"/>
<protein>
    <recommendedName>
        <fullName>RNA-directed RNA polymerase L</fullName>
        <shortName>Protein L</shortName>
    </recommendedName>
    <alternativeName>
        <fullName>Large structural protein</fullName>
    </alternativeName>
    <alternativeName>
        <fullName>Replicase</fullName>
    </alternativeName>
    <alternativeName>
        <fullName>Transcriptase</fullName>
    </alternativeName>
    <domain>
        <recommendedName>
            <fullName>RNA-directed RNA polymerase</fullName>
            <ecNumber evidence="2">2.7.7.48</ecNumber>
        </recommendedName>
    </domain>
    <domain>
        <recommendedName>
            <fullName evidence="1">GTP phosphohydrolase</fullName>
            <ecNumber evidence="1">3.6.1.-</ecNumber>
        </recommendedName>
    </domain>
    <domain>
        <recommendedName>
            <fullName evidence="5">GDP polyribonucleotidyltransferase</fullName>
            <ecNumber evidence="1">2.7.7.88</ecNumber>
        </recommendedName>
        <alternativeName>
            <fullName evidence="5">PRNTase</fullName>
        </alternativeName>
    </domain>
    <domain>
        <recommendedName>
            <fullName evidence="5">mRNA cap methyltransferase</fullName>
            <ecNumber evidence="1">2.1.1.375</ecNumber>
        </recommendedName>
        <alternativeName>
            <fullName evidence="1">mRNA (guanine-N(7)-)-methyltransferase</fullName>
            <shortName evidence="1">G-N7-MTase</shortName>
        </alternativeName>
        <alternativeName>
            <fullName evidence="1">mRNA (nucleoside-2'-O-)-methyltransferase</fullName>
            <shortName evidence="1">N1-2'-O-MTase</shortName>
        </alternativeName>
    </domain>
</protein>
<dbReference type="EC" id="2.7.7.48" evidence="2"/>
<dbReference type="EC" id="3.6.1.-" evidence="1"/>
<dbReference type="EC" id="2.7.7.88" evidence="1"/>
<dbReference type="EC" id="2.1.1.375" evidence="1"/>
<dbReference type="EMBL" id="AF104985">
    <property type="protein sequence ID" value="AAQ73462.1"/>
    <property type="molecule type" value="Genomic_RNA"/>
</dbReference>
<dbReference type="SMR" id="Q77SJ8"/>
<dbReference type="KEGG" id="vg:2559539"/>
<dbReference type="Proteomes" id="UP000008118">
    <property type="component" value="Segment"/>
</dbReference>
<dbReference type="GO" id="GO:0030430">
    <property type="term" value="C:host cell cytoplasm"/>
    <property type="evidence" value="ECO:0007669"/>
    <property type="project" value="UniProtKB-SubCell"/>
</dbReference>
<dbReference type="GO" id="GO:0044423">
    <property type="term" value="C:virion component"/>
    <property type="evidence" value="ECO:0007669"/>
    <property type="project" value="UniProtKB-KW"/>
</dbReference>
<dbReference type="GO" id="GO:0005524">
    <property type="term" value="F:ATP binding"/>
    <property type="evidence" value="ECO:0007669"/>
    <property type="project" value="UniProtKB-KW"/>
</dbReference>
<dbReference type="GO" id="GO:0003924">
    <property type="term" value="F:GTPase activity"/>
    <property type="evidence" value="ECO:0007669"/>
    <property type="project" value="RHEA"/>
</dbReference>
<dbReference type="GO" id="GO:0004482">
    <property type="term" value="F:mRNA 5'-cap (guanine-N7-)-methyltransferase activity"/>
    <property type="evidence" value="ECO:0007669"/>
    <property type="project" value="InterPro"/>
</dbReference>
<dbReference type="GO" id="GO:0003968">
    <property type="term" value="F:RNA-directed RNA polymerase activity"/>
    <property type="evidence" value="ECO:0007669"/>
    <property type="project" value="UniProtKB-KW"/>
</dbReference>
<dbReference type="InterPro" id="IPR026890">
    <property type="entry name" value="Mononeg_mRNAcap"/>
</dbReference>
<dbReference type="InterPro" id="IPR014023">
    <property type="entry name" value="Mononeg_RNA_pol_cat"/>
</dbReference>
<dbReference type="InterPro" id="IPR025786">
    <property type="entry name" value="Mononega_L_MeTrfase"/>
</dbReference>
<dbReference type="Pfam" id="PF14318">
    <property type="entry name" value="Mononeg_mRNAcap"/>
    <property type="match status" value="1"/>
</dbReference>
<dbReference type="Pfam" id="PF00946">
    <property type="entry name" value="Mononeg_RNA_pol"/>
    <property type="match status" value="1"/>
</dbReference>
<dbReference type="PROSITE" id="PS50526">
    <property type="entry name" value="RDRP_SSRNA_NEG_NONSEG"/>
    <property type="match status" value="1"/>
</dbReference>
<dbReference type="PROSITE" id="PS51590">
    <property type="entry name" value="SAM_MT_MNV_L"/>
    <property type="match status" value="1"/>
</dbReference>
<organism>
    <name type="scientific">Hirame rhabdovirus (strain Korea/CA 9703/1997)</name>
    <name type="common">HIRRV</name>
    <dbReference type="NCBI Taxonomy" id="453457"/>
    <lineage>
        <taxon>Viruses</taxon>
        <taxon>Riboviria</taxon>
        <taxon>Orthornavirae</taxon>
        <taxon>Negarnaviricota</taxon>
        <taxon>Haploviricotina</taxon>
        <taxon>Monjiviricetes</taxon>
        <taxon>Mononegavirales</taxon>
        <taxon>Rhabdoviridae</taxon>
        <taxon>Gammarhabdovirinae</taxon>
        <taxon>Novirhabdovirus</taxon>
        <taxon>Novirhabdovirus hirame</taxon>
    </lineage>
</organism>
<sequence length="1986" mass="224461">MDFFDLDIEIKQERLPAECSLNSPLNISLSSQLTDRMTPQNENIRRQRERIRTHTKTHSRIKHLSKLDNDSTRLHARLTEDLIKLQHLEVDSPVFDNWALLTSYYAALDYTLPERASFDWGQAAPYWNLYTQLRTILLQSQKIRKKDRGVREIYSCGPLRLEFVEGTVLYFTDKQSGGEFTKSGELPSITPYADFLAWVKIISQRAQAVLMAVILRVTDKGLSPLPESLLSVYQTVDDILKRAGQPAIDLLKLWEPLVITKLGELLGDRFGLEEDFRLTIRGEATRLAKKLAITNGLNRLMTVLDSQTEAQPLFQFFGLFKHFAYPRVFSRDTIQAIQEVSDRPSSISAAEFLHDQCEIRKEFYIRYLKAYHRAPGLDLSALSPSSFLRESLEHGKIPNEKSPHYSNKEWYFIKFTKSIEWPISDTLSTFLSDKAITRDRAAWIEEGHSGRDMSEKRLLLKFIKENFSSVAEIVAAADAIYNNEGDRLIALKVKEMELKIKGRGFGLMTFMPRLLQVLRESIAKKTSKLFPEITMTSSDLDMKKRKFMLSKRSDDRRGFIHINKSLDINKFCTSQRQFNSSAVFSSLDEMMGTFPLFSRVHEIFEKTWIVDGSASDPPDLSHFTRILEECRLHGIEAPHVWADGVFSGLKGGIEGLCQYVWTICLLLRVERVMQKTKLTHYILAQGDNVIITIIVPVEIHRDGIISDQESRRLLTLSRNIDLSLESELEKSGLTLKIEETLTSENISIYGKDLHCPQHLTLALKKAASAAIISSEQYQDIPTFLSGLGTSLESLSECVNSKTGAHLFGVLMGVAGWKDLATHQTWRGWRYPYHKAPLSGRVRASDMKIGKGEAVELTIPVMSPRQQGKETLRELLANSLLGSALGMLAFPTPIDLEKRGVGDYITHRLAIARKALLSEKLDPHIEKRVRSACNLPLSSRVDLSKLFDSPFSLNLATEEDATAVIKRQAKKTLRLQEIGNDKLRAQIGNMDKGIAALDADLAGAETINPRLNHMIRDITDEKESEMFVTKFASARTMRTLAMGDSSEVPIVVLLEKKSQQKELYTIWRARRPHATMWKCSTVLAKGLRDISWGKTIVGVTSPSPIEAMETTHIDPTDWEDSRSRETLSINYYLSRAGIDEQTAKLTRGSLVPYYGTQTKPLIAKAYLELKGNPRTNKALLLLSVRESLVKTGSNLDELIMQLCSHALDIDAASLPALRAQEEATAGEGLRGGIKESMSPVGPDNFYTNITHKVFNRKWVTPYHVNIADFIIQGLIETRKHLILNEKMDGLLPLSSVKCTACFRKKEREFFDIPEGPTWKNDSTTSDPAYTYFTTWCDLPRVSTLPTMDQQSATRLLGRGLSLNRPTAGEIITKFYSMSMESQRLLHPVDLLLGYGEGVVFGYIRSQHIHHGALFQTKRETLTNKLRKFILDTKTQHAKQIGYLFQDEDSLHELMAQGLCPYVPRSIPLTITELTNACAITTIRATEVILSAGSRVALMPVQAIDETDVDNSRLAANTMQTILGDSRPMNPVYLDCDLTTNMTAWESSIELDVLKSENFHIDGLLMDLTARELPISDTPWKQRDWTCSNDPRIIAKGIKTKSLFIHQGVAEALNMTPDLLVVIGGGLGGCAVPYLQEWADVPLIFATLFDERERISEDGDLVVPPEILVRGMAPRMIERELLEAELCDVTNDGNRRLLTRLVKKNRGKGTVVLIDEIENRGAPESLLQSSLQDLVRRLDKVCTLTSIHTVRESTVEQFAQRTNSIKRDRKTVTLHWNRYNRRDQFEALVIVKGEETRSDYHVSTATAAQAFRKIDEQLEVEGRLSATRWSLPTLPAREKEILFGYVSSVFLKTNLVLSADDMDRETLLETIEDTAPGLISWKEKLEHRDHAFRSDIDEKGITQDKVFNLICLAWVITGLRYGIWETDAQSIITKTVYITRGPKLCPLGEKPKRVFASFKLQSDKRVEDAKGFLSALLHLEGFFPLGRQ</sequence>
<gene>
    <name type="primary">L</name>
</gene>
<comment type="function">
    <text evidence="1">RNA-directed RNA polymerase that catalyzes the transcription of viral mRNAs, their capping and polyadenylation. The template is composed of the viral RNA tightly encapsidated by the nucleoprotein (N). The viral polymerase binds to the genomic RNA at the 3' leader promoter, and transcribes subsequently all viral mRNAs with a decreasing efficiency. The first gene is the most transcribed, and the last the least transcribed. The viral phosphoprotein acts as a processivity factor. Capping is concomitant with initiation of mRNA transcription. Indeed, a GDP polyribonucleotidyl transferase (PRNTase) adds the cap structure when the nascent RNA chain length has reached few nucleotides. Ribose 2'-O methylation of viral mRNA cap precedes and facilitates subsequent guanine-N-7 methylation, both activities being carried by the viral polymerase. Polyadenylation of mRNAs occur by a stuttering mechanism at a slipery stop site present at the end viral genes. After finishing transcription of a mRNA, the polymerase can resume transcription of the downstream gene.</text>
</comment>
<comment type="function">
    <text evidence="1">RNA-directed RNA polymerase that catalyzes the replication of viral genomic RNA. The template is composed of the viral RNA tightly encapsidated by the nucleoprotein (N). The replicase mode is dependent on intracellular N protein concentration. In this mode, the polymerase replicates the whole viral genome without recognizing transcriptional signals, and the replicated genome is not caped or polyadenylated.</text>
</comment>
<comment type="catalytic activity">
    <reaction evidence="3">
        <text>RNA(n) + a ribonucleoside 5'-triphosphate = RNA(n+1) + diphosphate</text>
        <dbReference type="Rhea" id="RHEA:21248"/>
        <dbReference type="Rhea" id="RHEA-COMP:14527"/>
        <dbReference type="Rhea" id="RHEA-COMP:17342"/>
        <dbReference type="ChEBI" id="CHEBI:33019"/>
        <dbReference type="ChEBI" id="CHEBI:61557"/>
        <dbReference type="ChEBI" id="CHEBI:140395"/>
        <dbReference type="EC" id="2.7.7.48"/>
    </reaction>
</comment>
<comment type="catalytic activity">
    <reaction evidence="1">
        <text>a 5'-end (5'-triphosphoguanosine)-adenylyl-adenylyl-cytidylyl-adenosine in mRNA + 2 S-adenosyl-L-methionine = a 5'-end (N(7)-methyl 5'-triphosphoguanosine)-(2'-O-methyladenylyl)-adenylyl-cytidylyl-adenosine in mRNA + 2 S-adenosyl-L-homocysteine + H(+)</text>
        <dbReference type="Rhea" id="RHEA:65376"/>
        <dbReference type="Rhea" id="RHEA-COMP:16797"/>
        <dbReference type="Rhea" id="RHEA-COMP:16798"/>
        <dbReference type="ChEBI" id="CHEBI:15378"/>
        <dbReference type="ChEBI" id="CHEBI:57856"/>
        <dbReference type="ChEBI" id="CHEBI:59789"/>
        <dbReference type="ChEBI" id="CHEBI:156483"/>
        <dbReference type="ChEBI" id="CHEBI:156484"/>
        <dbReference type="EC" id="2.1.1.375"/>
    </reaction>
</comment>
<comment type="catalytic activity">
    <reaction evidence="1">
        <text>a 5'-end (5'-triphosphoguanosine)-adenylyl-adenylyl-cytidylyl-adenosine in mRNA + S-adenosyl-L-methionine = a 5'-end (5'-triphosphoguanosine)-(2'-O-methyladenylyl)-adenylyl-cytidylyl-adenosine in mRNA + S-adenosyl-L-homocysteine + H(+)</text>
        <dbReference type="Rhea" id="RHEA:65380"/>
        <dbReference type="Rhea" id="RHEA-COMP:16797"/>
        <dbReference type="Rhea" id="RHEA-COMP:16801"/>
        <dbReference type="ChEBI" id="CHEBI:15378"/>
        <dbReference type="ChEBI" id="CHEBI:57856"/>
        <dbReference type="ChEBI" id="CHEBI:59789"/>
        <dbReference type="ChEBI" id="CHEBI:156482"/>
        <dbReference type="ChEBI" id="CHEBI:156484"/>
    </reaction>
</comment>
<comment type="catalytic activity">
    <reaction evidence="2">
        <text>a 5'-end triphospho-adenylyl-adenylyl-cytidylyl-adenosine in mRNA + GDP + H(+) = a 5'-end (5'-triphosphoguanosine)-adenylyl-adenylyl-cytidylyl-adenosine in mRNA + diphosphate</text>
        <dbReference type="Rhea" id="RHEA:65436"/>
        <dbReference type="Rhea" id="RHEA-COMP:16797"/>
        <dbReference type="Rhea" id="RHEA-COMP:16799"/>
        <dbReference type="ChEBI" id="CHEBI:15378"/>
        <dbReference type="ChEBI" id="CHEBI:33019"/>
        <dbReference type="ChEBI" id="CHEBI:58189"/>
        <dbReference type="ChEBI" id="CHEBI:156484"/>
        <dbReference type="ChEBI" id="CHEBI:156503"/>
        <dbReference type="EC" id="2.7.7.88"/>
    </reaction>
</comment>
<comment type="catalytic activity">
    <reaction evidence="1">
        <text>a 5'-end (5'-triphosphoguanosine)-(2'-O-methyladenylyl)-adenylyl-cytidylyl-adenosine in mRNA + S-adenosyl-L-methionine = a 5'-end (N(7)-methyl 5'-triphosphoguanosine)-(2'-O-methyladenylyl)-adenylyl-cytidylyl-adenosine in mRNA + S-adenosyl-L-homocysteine</text>
        <dbReference type="Rhea" id="RHEA:65440"/>
        <dbReference type="Rhea" id="RHEA-COMP:16798"/>
        <dbReference type="Rhea" id="RHEA-COMP:16801"/>
        <dbReference type="ChEBI" id="CHEBI:57856"/>
        <dbReference type="ChEBI" id="CHEBI:59789"/>
        <dbReference type="ChEBI" id="CHEBI:156482"/>
        <dbReference type="ChEBI" id="CHEBI:156483"/>
    </reaction>
</comment>
<comment type="catalytic activity">
    <reaction evidence="2">
        <text>GTP + H2O = GDP + phosphate + H(+)</text>
        <dbReference type="Rhea" id="RHEA:19669"/>
        <dbReference type="ChEBI" id="CHEBI:15377"/>
        <dbReference type="ChEBI" id="CHEBI:15378"/>
        <dbReference type="ChEBI" id="CHEBI:37565"/>
        <dbReference type="ChEBI" id="CHEBI:43474"/>
        <dbReference type="ChEBI" id="CHEBI:58189"/>
    </reaction>
</comment>
<comment type="subunit">
    <text evidence="1">May form homodimer. Interacts with the P protein.</text>
</comment>
<comment type="subcellular location">
    <subcellularLocation>
        <location evidence="1">Virion</location>
    </subcellularLocation>
    <subcellularLocation>
        <location evidence="1">Host cytoplasm</location>
    </subcellularLocation>
    <text evidence="1">L and P are packaged asymmetrically towards the blunt end of the virus.</text>
</comment>
<comment type="similarity">
    <text evidence="5">Belongs to the rhabdoviridae protein L family.</text>
</comment>